<dbReference type="EC" id="1.14.14.80" evidence="3"/>
<dbReference type="EMBL" id="AF208532">
    <property type="protein sequence ID" value="AAF76722.1"/>
    <property type="molecule type" value="Genomic_DNA"/>
</dbReference>
<dbReference type="EMBL" id="AY280371">
    <property type="protein sequence ID" value="AAQ21367.1"/>
    <property type="molecule type" value="mRNA"/>
</dbReference>
<dbReference type="EMBL" id="AY280372">
    <property type="protein sequence ID" value="AAQ21368.1"/>
    <property type="molecule type" value="mRNA"/>
</dbReference>
<dbReference type="EMBL" id="AL135960">
    <property type="protein sequence ID" value="CAI19737.1"/>
    <property type="molecule type" value="Genomic_DNA"/>
</dbReference>
<dbReference type="EMBL" id="AL135960">
    <property type="protein sequence ID" value="CAI19738.1"/>
    <property type="molecule type" value="Genomic_DNA"/>
</dbReference>
<dbReference type="EMBL" id="BC148248">
    <property type="protein sequence ID" value="AAI48249.1"/>
    <property type="molecule type" value="mRNA"/>
</dbReference>
<dbReference type="CCDS" id="CCDS30707.1">
    <molecule id="Q5TCH4-1"/>
</dbReference>
<dbReference type="RefSeq" id="NP_001010969.2">
    <molecule id="Q5TCH4-1"/>
    <property type="nucleotide sequence ID" value="NM_001010969.4"/>
</dbReference>
<dbReference type="RefSeq" id="NP_001295031.1">
    <property type="nucleotide sequence ID" value="NM_001308102.1"/>
</dbReference>
<dbReference type="SMR" id="Q5TCH4"/>
<dbReference type="BioGRID" id="129896">
    <property type="interactions" value="2"/>
</dbReference>
<dbReference type="FunCoup" id="Q5TCH4">
    <property type="interactions" value="75"/>
</dbReference>
<dbReference type="IntAct" id="Q5TCH4">
    <property type="interactions" value="2"/>
</dbReference>
<dbReference type="STRING" id="9606.ENSP00000360958"/>
<dbReference type="BindingDB" id="Q5TCH4"/>
<dbReference type="ChEMBL" id="CHEMBL4523986"/>
<dbReference type="iPTMnet" id="Q5TCH4"/>
<dbReference type="PhosphoSitePlus" id="Q5TCH4"/>
<dbReference type="BioMuta" id="CYP4A22"/>
<dbReference type="DMDM" id="74746067"/>
<dbReference type="jPOST" id="Q5TCH4"/>
<dbReference type="MassIVE" id="Q5TCH4"/>
<dbReference type="PaxDb" id="9606-ENSP00000360958"/>
<dbReference type="PeptideAtlas" id="Q5TCH4"/>
<dbReference type="ProteomicsDB" id="64954">
    <molecule id="Q5TCH4-1"/>
</dbReference>
<dbReference type="ProteomicsDB" id="64955">
    <molecule id="Q5TCH4-2"/>
</dbReference>
<dbReference type="Antibodypedia" id="18854">
    <property type="antibodies" value="91 antibodies from 17 providers"/>
</dbReference>
<dbReference type="DNASU" id="284541"/>
<dbReference type="Ensembl" id="ENST00000371891.8">
    <molecule id="Q5TCH4-1"/>
    <property type="protein sequence ID" value="ENSP00000360958.3"/>
    <property type="gene ID" value="ENSG00000162365.13"/>
</dbReference>
<dbReference type="GeneID" id="284541"/>
<dbReference type="KEGG" id="hsa:284541"/>
<dbReference type="MANE-Select" id="ENST00000371891.8">
    <property type="protein sequence ID" value="ENSP00000360958.3"/>
    <property type="RefSeq nucleotide sequence ID" value="NM_001010969.4"/>
    <property type="RefSeq protein sequence ID" value="NP_001010969.2"/>
</dbReference>
<dbReference type="UCSC" id="uc001cqv.2">
    <molecule id="Q5TCH4-1"/>
    <property type="organism name" value="human"/>
</dbReference>
<dbReference type="AGR" id="HGNC:20575"/>
<dbReference type="CTD" id="284541"/>
<dbReference type="DisGeNET" id="284541"/>
<dbReference type="GeneCards" id="CYP4A22"/>
<dbReference type="HGNC" id="HGNC:20575">
    <property type="gene designation" value="CYP4A22"/>
</dbReference>
<dbReference type="HPA" id="ENSG00000162365">
    <property type="expression patterns" value="Tissue enriched (liver)"/>
</dbReference>
<dbReference type="MIM" id="615341">
    <property type="type" value="gene"/>
</dbReference>
<dbReference type="neXtProt" id="NX_Q5TCH4"/>
<dbReference type="OpenTargets" id="ENSG00000162365"/>
<dbReference type="PharmGKB" id="PA134979692"/>
<dbReference type="VEuPathDB" id="HostDB:ENSG00000162365"/>
<dbReference type="eggNOG" id="KOG0157">
    <property type="taxonomic scope" value="Eukaryota"/>
</dbReference>
<dbReference type="GeneTree" id="ENSGT00940000163504"/>
<dbReference type="HOGENOM" id="CLU_001570_5_1_1"/>
<dbReference type="InParanoid" id="Q5TCH4"/>
<dbReference type="OMA" id="KWFMSTS"/>
<dbReference type="OrthoDB" id="1470350at2759"/>
<dbReference type="PAN-GO" id="Q5TCH4">
    <property type="GO annotations" value="8 GO annotations based on evolutionary models"/>
</dbReference>
<dbReference type="PhylomeDB" id="Q5TCH4"/>
<dbReference type="TreeFam" id="TF105088"/>
<dbReference type="PathwayCommons" id="Q5TCH4"/>
<dbReference type="Reactome" id="R-HSA-211935">
    <property type="pathway name" value="Fatty acids"/>
</dbReference>
<dbReference type="Reactome" id="R-HSA-211958">
    <property type="pathway name" value="Miscellaneous substrates"/>
</dbReference>
<dbReference type="Reactome" id="R-HSA-211979">
    <property type="pathway name" value="Eicosanoids"/>
</dbReference>
<dbReference type="Reactome" id="R-HSA-2142691">
    <property type="pathway name" value="Synthesis of Leukotrienes (LT) and Eoxins (EX)"/>
</dbReference>
<dbReference type="SignaLink" id="Q5TCH4"/>
<dbReference type="BioGRID-ORCS" id="284541">
    <property type="hits" value="9 hits in 1109 CRISPR screens"/>
</dbReference>
<dbReference type="ChiTaRS" id="CYP4A22">
    <property type="organism name" value="human"/>
</dbReference>
<dbReference type="GeneWiki" id="CYP4A22"/>
<dbReference type="GenomeRNAi" id="284541"/>
<dbReference type="Pharos" id="Q5TCH4">
    <property type="development level" value="Tbio"/>
</dbReference>
<dbReference type="PRO" id="PR:Q5TCH4"/>
<dbReference type="Proteomes" id="UP000005640">
    <property type="component" value="Chromosome 1"/>
</dbReference>
<dbReference type="RNAct" id="Q5TCH4">
    <property type="molecule type" value="protein"/>
</dbReference>
<dbReference type="Bgee" id="ENSG00000162365">
    <property type="expression patterns" value="Expressed in right lobe of liver and 57 other cell types or tissues"/>
</dbReference>
<dbReference type="ExpressionAtlas" id="Q5TCH4">
    <property type="expression patterns" value="baseline and differential"/>
</dbReference>
<dbReference type="GO" id="GO:0005789">
    <property type="term" value="C:endoplasmic reticulum membrane"/>
    <property type="evidence" value="ECO:0007669"/>
    <property type="project" value="UniProtKB-SubCell"/>
</dbReference>
<dbReference type="GO" id="GO:0005615">
    <property type="term" value="C:extracellular space"/>
    <property type="evidence" value="ECO:0000314"/>
    <property type="project" value="UniProtKB"/>
</dbReference>
<dbReference type="GO" id="GO:0043231">
    <property type="term" value="C:intracellular membrane-bounded organelle"/>
    <property type="evidence" value="ECO:0000318"/>
    <property type="project" value="GO_Central"/>
</dbReference>
<dbReference type="GO" id="GO:0103002">
    <property type="term" value="F:16-hydroxypalmitate dehydrogenase activity"/>
    <property type="evidence" value="ECO:0000314"/>
    <property type="project" value="UniProtKB"/>
</dbReference>
<dbReference type="GO" id="GO:0018685">
    <property type="term" value="F:alkane 1-monooxygenase activity"/>
    <property type="evidence" value="ECO:0000318"/>
    <property type="project" value="GO_Central"/>
</dbReference>
<dbReference type="GO" id="GO:0008391">
    <property type="term" value="F:arachidonate monooxygenase activity"/>
    <property type="evidence" value="ECO:0000318"/>
    <property type="project" value="GO_Central"/>
</dbReference>
<dbReference type="GO" id="GO:0020037">
    <property type="term" value="F:heme binding"/>
    <property type="evidence" value="ECO:0007669"/>
    <property type="project" value="InterPro"/>
</dbReference>
<dbReference type="GO" id="GO:0005506">
    <property type="term" value="F:iron ion binding"/>
    <property type="evidence" value="ECO:0007669"/>
    <property type="project" value="InterPro"/>
</dbReference>
<dbReference type="GO" id="GO:0102033">
    <property type="term" value="F:long-chain fatty acid omega-hydroxylase activity"/>
    <property type="evidence" value="ECO:0007669"/>
    <property type="project" value="UniProtKB-EC"/>
</dbReference>
<dbReference type="GO" id="GO:0140981">
    <property type="term" value="F:medium-chain fatty acid omega-hydroxylase activity"/>
    <property type="evidence" value="ECO:0000314"/>
    <property type="project" value="UniProtKB"/>
</dbReference>
<dbReference type="GO" id="GO:0019369">
    <property type="term" value="P:arachidonate metabolic process"/>
    <property type="evidence" value="ECO:0000318"/>
    <property type="project" value="GO_Central"/>
</dbReference>
<dbReference type="GO" id="GO:0046456">
    <property type="term" value="P:icosanoid biosynthetic process"/>
    <property type="evidence" value="ECO:0000318"/>
    <property type="project" value="GO_Central"/>
</dbReference>
<dbReference type="GO" id="GO:0001822">
    <property type="term" value="P:kidney development"/>
    <property type="evidence" value="ECO:0000318"/>
    <property type="project" value="GO_Central"/>
</dbReference>
<dbReference type="GO" id="GO:0048252">
    <property type="term" value="P:lauric acid metabolic process"/>
    <property type="evidence" value="ECO:0000318"/>
    <property type="project" value="GO_Central"/>
</dbReference>
<dbReference type="GO" id="GO:0043651">
    <property type="term" value="P:linoleic acid metabolic process"/>
    <property type="evidence" value="ECO:0000318"/>
    <property type="project" value="GO_Central"/>
</dbReference>
<dbReference type="GO" id="GO:0002933">
    <property type="term" value="P:lipid hydroxylation"/>
    <property type="evidence" value="ECO:0000314"/>
    <property type="project" value="UniProtKB"/>
</dbReference>
<dbReference type="CDD" id="cd20678">
    <property type="entry name" value="CYP4B-like"/>
    <property type="match status" value="1"/>
</dbReference>
<dbReference type="FunFam" id="1.10.630.10:FF:000005">
    <property type="entry name" value="cytochrome P450 4F22 isoform X2"/>
    <property type="match status" value="1"/>
</dbReference>
<dbReference type="Gene3D" id="1.10.630.10">
    <property type="entry name" value="Cytochrome P450"/>
    <property type="match status" value="1"/>
</dbReference>
<dbReference type="InterPro" id="IPR001128">
    <property type="entry name" value="Cyt_P450"/>
</dbReference>
<dbReference type="InterPro" id="IPR017972">
    <property type="entry name" value="Cyt_P450_CS"/>
</dbReference>
<dbReference type="InterPro" id="IPR002401">
    <property type="entry name" value="Cyt_P450_E_grp-I"/>
</dbReference>
<dbReference type="InterPro" id="IPR036396">
    <property type="entry name" value="Cyt_P450_sf"/>
</dbReference>
<dbReference type="InterPro" id="IPR050196">
    <property type="entry name" value="Cytochrome_P450_Monoox"/>
</dbReference>
<dbReference type="PANTHER" id="PTHR24291:SF39">
    <property type="entry name" value="CYTOCHROME P450 4A11-RELATED"/>
    <property type="match status" value="1"/>
</dbReference>
<dbReference type="PANTHER" id="PTHR24291">
    <property type="entry name" value="CYTOCHROME P450 FAMILY 4"/>
    <property type="match status" value="1"/>
</dbReference>
<dbReference type="Pfam" id="PF00067">
    <property type="entry name" value="p450"/>
    <property type="match status" value="1"/>
</dbReference>
<dbReference type="PRINTS" id="PR00463">
    <property type="entry name" value="EP450I"/>
</dbReference>
<dbReference type="PRINTS" id="PR00385">
    <property type="entry name" value="P450"/>
</dbReference>
<dbReference type="SUPFAM" id="SSF48264">
    <property type="entry name" value="Cytochrome P450"/>
    <property type="match status" value="1"/>
</dbReference>
<dbReference type="PROSITE" id="PS00086">
    <property type="entry name" value="CYTOCHROME_P450"/>
    <property type="match status" value="1"/>
</dbReference>
<feature type="propeptide" id="PRO_0000343408" evidence="1">
    <location>
        <begin position="1"/>
        <end position="4"/>
    </location>
</feature>
<feature type="chain" id="PRO_0000343409" description="Cytochrome P450 4A22">
    <location>
        <begin position="5"/>
        <end position="519"/>
    </location>
</feature>
<feature type="binding site" description="covalent" evidence="1">
    <location>
        <position position="321"/>
    </location>
    <ligand>
        <name>heme</name>
        <dbReference type="ChEBI" id="CHEBI:30413"/>
    </ligand>
</feature>
<feature type="binding site" description="axial binding residue" evidence="1">
    <location>
        <position position="457"/>
    </location>
    <ligand>
        <name>heme</name>
        <dbReference type="ChEBI" id="CHEBI:30413"/>
    </ligand>
    <ligandPart>
        <name>Fe</name>
        <dbReference type="ChEBI" id="CHEBI:18248"/>
    </ligandPart>
</feature>
<feature type="modified residue" description="Phosphoserine" evidence="2">
    <location>
        <position position="440"/>
    </location>
</feature>
<feature type="splice variant" id="VSP_034584" description="In isoform 2." evidence="6">
    <location>
        <begin position="356"/>
        <end position="519"/>
    </location>
</feature>
<feature type="sequence variant" id="VAR_044349" description="In allele CYP4A22*2 and CYP4A22*3; dbSNP:rs76011927." evidence="5">
    <original>R</original>
    <variation>C</variation>
    <location>
        <position position="11"/>
    </location>
</feature>
<feature type="sequence variant" id="VAR_061045" description="In dbSNP:rs61507155.">
    <original>Y</original>
    <variation>F</variation>
    <location>
        <position position="104"/>
    </location>
</feature>
<feature type="sequence variant" id="VAR_044350" description="In dbSNP:rs2758717." evidence="3">
    <original>K</original>
    <variation>R</variation>
    <location>
        <position position="121"/>
    </location>
</feature>
<feature type="sequence variant" id="VAR_044351" description="In allele CYP4A22*8, allele CYP4A22*9, allele CYP4A22*11, allele CYP4A22*12, allele CYP4A22*13, allele CYP4A22*14 and allele CYP4A22*15; dbSNP:rs12564525." evidence="4 5">
    <original>R</original>
    <variation>W</variation>
    <location>
        <position position="126"/>
    </location>
</feature>
<feature type="sequence variant" id="VAR_044352" description="In allele CYP4A22*4, allele CYP4A22*10, allele CYP4A22*12, allele CYP4A22*13, allele CYP4A22*14 and allele CYP4A22*15; dbSNP:rs2056900." evidence="4 5">
    <original>G</original>
    <variation>S</variation>
    <location>
        <position position="130"/>
    </location>
</feature>
<feature type="sequence variant" id="VAR_044353" description="In allele CYP4A22*2, allele CYP4A22*3, allele CYP4A22*4, allele CYP4A22*5, allele CYP4A22*6, allele CYP4A22*7, allele CYP4A22*8, allele CYP4A22*9, allele CYP4A22*10, allele CYP4A22*11, allele CYP4A22*12, allele CYP4A22*13, allele CYP4A22*14 and allele CYP4A22*15; dbSNP:rs2056899." evidence="4 5">
    <original>N</original>
    <variation>Y</variation>
    <location>
        <position position="152"/>
    </location>
</feature>
<feature type="sequence variant" id="VAR_044354" description="In allele CYP4A22*10, allele CYP4A22*11, allele CYP4A22*12, allele CYP4A22*13, allele CYP4A22*14 and allele CYP4A22*15; dbSNP:rs4926581." evidence="5">
    <original>V</original>
    <variation>F</variation>
    <location>
        <position position="185"/>
    </location>
</feature>
<feature type="sequence variant" id="VAR_044355" description="In dbSNP:rs35202523." evidence="4">
    <original>S</original>
    <variation>N</variation>
    <location>
        <position position="226"/>
    </location>
</feature>
<feature type="sequence variant" id="VAR_044356" description="In dbSNP:rs35156123." evidence="4">
    <original>C</original>
    <variation>S</variation>
    <location>
        <position position="230"/>
    </location>
</feature>
<feature type="sequence variant" id="VAR_044357" description="Allele CYP4A22*2, allele CYP4A22*3, allele CYP4A22*4, allele CYP4A22*5, allele CYP4A22*6, allele CYP4A22*7, allele CYP4A22*8, allele CYP4A22*9, allele CYP4A22*10, allele CYP4A22*11, allele CYP4A22*12, allele CYP4A22*13, allele CYP4A22*14 and allele CYP4A22*15; dbSNP:rs10789501." evidence="4 5">
    <original>C</original>
    <variation>R</variation>
    <location>
        <position position="231"/>
    </location>
</feature>
<feature type="sequence variant" id="VAR_044358" description="In allele CYP4A22*8, allele CYP4A22*11, allele CYP4A22*14 and allele CYP4A22*15; dbSNP:rs6661132." evidence="5">
    <original>K</original>
    <variation>T</variation>
    <location>
        <position position="276"/>
    </location>
</feature>
<feature type="sequence variant" id="VAR_044359" description="In allele CYP4A22*6, allele CYP4A22*9, allele CYP4A22*10, allele CYP4A22*12, allele CYP4A22*13 and allele CYP4A22*15; dbSNP:rs2405599." evidence="4 5">
    <original>L</original>
    <variation>P</variation>
    <location>
        <position position="428"/>
    </location>
</feature>
<feature type="sequence variant" id="VAR_044360" description="In dbSNP:rs2758714." evidence="3">
    <original>M</original>
    <variation>I</variation>
    <location>
        <position position="491"/>
    </location>
</feature>
<feature type="sequence variant" id="VAR_044361" description="In allele CYP4A22*7, allele CYP4A22*10, allele CYP4A22*11, allele CYP4A22*13, allele CYP4A22*14 and allele CYP4A22*15; dbSNP:rs4926600." evidence="4 5">
    <original>L</original>
    <variation>F</variation>
    <location>
        <position position="509"/>
    </location>
</feature>
<feature type="sequence conflict" description="In Ref. 2; AAQ21368." evidence="6" ref="2">
    <original>S</original>
    <variation>A</variation>
    <location>
        <position position="2"/>
    </location>
</feature>
<feature type="sequence conflict" description="In Ref. 2; AAQ21368." evidence="6" ref="2">
    <original>P</original>
    <variation>S</variation>
    <location>
        <position position="114"/>
    </location>
</feature>
<feature type="sequence conflict" description="In Ref. 2; AAQ21368." evidence="6" ref="2">
    <original>N</original>
    <variation>S</variation>
    <location>
        <position position="225"/>
    </location>
</feature>
<feature type="sequence conflict" description="In Ref. 2; AAQ21367." evidence="6" ref="2">
    <original>M</original>
    <variation>V</variation>
    <location>
        <position position="232"/>
    </location>
</feature>
<feature type="sequence conflict" description="In Ref. 2; AAQ21367." evidence="6" ref="2">
    <original>E</original>
    <variation>Q</variation>
    <location>
        <position position="238"/>
    </location>
</feature>
<feature type="sequence conflict" description="In Ref. 2; AAQ21368." evidence="6" ref="2">
    <original>T</original>
    <variation>A</variation>
    <location>
        <position position="241"/>
    </location>
</feature>
<feature type="sequence conflict" description="In Ref. 2; AAQ21367." evidence="6" ref="2">
    <original>G</original>
    <variation>S</variation>
    <location>
        <position position="353"/>
    </location>
</feature>
<feature type="sequence conflict" description="In Ref. 2; AAQ21367." evidence="6" ref="2">
    <original>S</original>
    <variation>F</variation>
    <location>
        <position position="434"/>
    </location>
</feature>
<feature type="sequence conflict" description="In Ref. 2; AAQ21367." evidence="6" ref="2">
    <original>I</original>
    <variation>T</variation>
    <location>
        <position position="487"/>
    </location>
</feature>
<organism>
    <name type="scientific">Homo sapiens</name>
    <name type="common">Human</name>
    <dbReference type="NCBI Taxonomy" id="9606"/>
    <lineage>
        <taxon>Eukaryota</taxon>
        <taxon>Metazoa</taxon>
        <taxon>Chordata</taxon>
        <taxon>Craniata</taxon>
        <taxon>Vertebrata</taxon>
        <taxon>Euteleostomi</taxon>
        <taxon>Mammalia</taxon>
        <taxon>Eutheria</taxon>
        <taxon>Euarchontoglires</taxon>
        <taxon>Primates</taxon>
        <taxon>Haplorrhini</taxon>
        <taxon>Catarrhini</taxon>
        <taxon>Hominidae</taxon>
        <taxon>Homo</taxon>
    </lineage>
</organism>
<name>CP4AM_HUMAN</name>
<accession>Q5TCH4</accession>
<accession>Q5TCH3</accession>
<accession>Q6JXK7</accession>
<accession>Q6JXK8</accession>
<accession>Q9NRM4</accession>
<reference key="1">
    <citation type="journal article" date="2000" name="Arch. Biochem. Biophys.">
        <title>Human fatty acid omega-hydroxylase, CYP4A11: determination of complete genomic sequence and characterization of purified recombinant protein.</title>
        <authorList>
            <person name="Kawashima H."/>
            <person name="Naganuma T."/>
            <person name="Kusunose E."/>
            <person name="Kono T."/>
            <person name="Yasumoto R."/>
            <person name="Sugimura K."/>
            <person name="Kishimoto T."/>
        </authorList>
    </citation>
    <scope>NUCLEOTIDE SEQUENCE [GENOMIC DNA] (ISOFORM 1)</scope>
    <scope>FUNCTION</scope>
    <scope>CATALYTIC ACTIVITY</scope>
    <scope>BIOPHYSICOCHEMICAL PROPERTIES</scope>
    <scope>VARIANTS ARG-121 AND ILE-491</scope>
</reference>
<reference key="2">
    <citation type="journal article" date="2005" name="Circulation">
        <title>Functional variant of CYP4A11 20-hydroxyeicosatetraenoic acid synthase is associated with essential hypertension.</title>
        <authorList>
            <person name="Gainer J.V."/>
            <person name="Bellamine A."/>
            <person name="Dawson E.P."/>
            <person name="Womble K.E."/>
            <person name="Grant S.W."/>
            <person name="Wang Y."/>
            <person name="Cupples L.A."/>
            <person name="Guo C.-Y."/>
            <person name="Demissie S."/>
            <person name="O'Donnell C.J."/>
            <person name="Brown N.J."/>
            <person name="Waterman M.R."/>
            <person name="Capdevila J.H."/>
        </authorList>
    </citation>
    <scope>NUCLEOTIDE SEQUENCE [MRNA] (ISOFORM 1)</scope>
    <scope>FUNCTION</scope>
    <scope>VARIANTS TRP-126; SER-130; TYR-152; ASN-226; SER-230; ARG-231; PRO-428 AND PHE-509</scope>
    <source>
        <tissue>Kidney</tissue>
        <tissue>Liver</tissue>
    </source>
</reference>
<reference key="3">
    <citation type="journal article" date="2006" name="Nature">
        <title>The DNA sequence and biological annotation of human chromosome 1.</title>
        <authorList>
            <person name="Gregory S.G."/>
            <person name="Barlow K.F."/>
            <person name="McLay K.E."/>
            <person name="Kaul R."/>
            <person name="Swarbreck D."/>
            <person name="Dunham A."/>
            <person name="Scott C.E."/>
            <person name="Howe K.L."/>
            <person name="Woodfine K."/>
            <person name="Spencer C.C.A."/>
            <person name="Jones M.C."/>
            <person name="Gillson C."/>
            <person name="Searle S."/>
            <person name="Zhou Y."/>
            <person name="Kokocinski F."/>
            <person name="McDonald L."/>
            <person name="Evans R."/>
            <person name="Phillips K."/>
            <person name="Atkinson A."/>
            <person name="Cooper R."/>
            <person name="Jones C."/>
            <person name="Hall R.E."/>
            <person name="Andrews T.D."/>
            <person name="Lloyd C."/>
            <person name="Ainscough R."/>
            <person name="Almeida J.P."/>
            <person name="Ambrose K.D."/>
            <person name="Anderson F."/>
            <person name="Andrew R.W."/>
            <person name="Ashwell R.I.S."/>
            <person name="Aubin K."/>
            <person name="Babbage A.K."/>
            <person name="Bagguley C.L."/>
            <person name="Bailey J."/>
            <person name="Beasley H."/>
            <person name="Bethel G."/>
            <person name="Bird C.P."/>
            <person name="Bray-Allen S."/>
            <person name="Brown J.Y."/>
            <person name="Brown A.J."/>
            <person name="Buckley D."/>
            <person name="Burton J."/>
            <person name="Bye J."/>
            <person name="Carder C."/>
            <person name="Chapman J.C."/>
            <person name="Clark S.Y."/>
            <person name="Clarke G."/>
            <person name="Clee C."/>
            <person name="Cobley V."/>
            <person name="Collier R.E."/>
            <person name="Corby N."/>
            <person name="Coville G.J."/>
            <person name="Davies J."/>
            <person name="Deadman R."/>
            <person name="Dunn M."/>
            <person name="Earthrowl M."/>
            <person name="Ellington A.G."/>
            <person name="Errington H."/>
            <person name="Frankish A."/>
            <person name="Frankland J."/>
            <person name="French L."/>
            <person name="Garner P."/>
            <person name="Garnett J."/>
            <person name="Gay L."/>
            <person name="Ghori M.R.J."/>
            <person name="Gibson R."/>
            <person name="Gilby L.M."/>
            <person name="Gillett W."/>
            <person name="Glithero R.J."/>
            <person name="Grafham D.V."/>
            <person name="Griffiths C."/>
            <person name="Griffiths-Jones S."/>
            <person name="Grocock R."/>
            <person name="Hammond S."/>
            <person name="Harrison E.S.I."/>
            <person name="Hart E."/>
            <person name="Haugen E."/>
            <person name="Heath P.D."/>
            <person name="Holmes S."/>
            <person name="Holt K."/>
            <person name="Howden P.J."/>
            <person name="Hunt A.R."/>
            <person name="Hunt S.E."/>
            <person name="Hunter G."/>
            <person name="Isherwood J."/>
            <person name="James R."/>
            <person name="Johnson C."/>
            <person name="Johnson D."/>
            <person name="Joy A."/>
            <person name="Kay M."/>
            <person name="Kershaw J.K."/>
            <person name="Kibukawa M."/>
            <person name="Kimberley A.M."/>
            <person name="King A."/>
            <person name="Knights A.J."/>
            <person name="Lad H."/>
            <person name="Laird G."/>
            <person name="Lawlor S."/>
            <person name="Leongamornlert D.A."/>
            <person name="Lloyd D.M."/>
            <person name="Loveland J."/>
            <person name="Lovell J."/>
            <person name="Lush M.J."/>
            <person name="Lyne R."/>
            <person name="Martin S."/>
            <person name="Mashreghi-Mohammadi M."/>
            <person name="Matthews L."/>
            <person name="Matthews N.S.W."/>
            <person name="McLaren S."/>
            <person name="Milne S."/>
            <person name="Mistry S."/>
            <person name="Moore M.J.F."/>
            <person name="Nickerson T."/>
            <person name="O'Dell C.N."/>
            <person name="Oliver K."/>
            <person name="Palmeiri A."/>
            <person name="Palmer S.A."/>
            <person name="Parker A."/>
            <person name="Patel D."/>
            <person name="Pearce A.V."/>
            <person name="Peck A.I."/>
            <person name="Pelan S."/>
            <person name="Phelps K."/>
            <person name="Phillimore B.J."/>
            <person name="Plumb R."/>
            <person name="Rajan J."/>
            <person name="Raymond C."/>
            <person name="Rouse G."/>
            <person name="Saenphimmachak C."/>
            <person name="Sehra H.K."/>
            <person name="Sheridan E."/>
            <person name="Shownkeen R."/>
            <person name="Sims S."/>
            <person name="Skuce C.D."/>
            <person name="Smith M."/>
            <person name="Steward C."/>
            <person name="Subramanian S."/>
            <person name="Sycamore N."/>
            <person name="Tracey A."/>
            <person name="Tromans A."/>
            <person name="Van Helmond Z."/>
            <person name="Wall M."/>
            <person name="Wallis J.M."/>
            <person name="White S."/>
            <person name="Whitehead S.L."/>
            <person name="Wilkinson J.E."/>
            <person name="Willey D.L."/>
            <person name="Williams H."/>
            <person name="Wilming L."/>
            <person name="Wray P.W."/>
            <person name="Wu Z."/>
            <person name="Coulson A."/>
            <person name="Vaudin M."/>
            <person name="Sulston J.E."/>
            <person name="Durbin R.M."/>
            <person name="Hubbard T."/>
            <person name="Wooster R."/>
            <person name="Dunham I."/>
            <person name="Carter N.P."/>
            <person name="McVean G."/>
            <person name="Ross M.T."/>
            <person name="Harrow J."/>
            <person name="Olson M.V."/>
            <person name="Beck S."/>
            <person name="Rogers J."/>
            <person name="Bentley D.R."/>
        </authorList>
    </citation>
    <scope>NUCLEOTIDE SEQUENCE [LARGE SCALE GENOMIC DNA]</scope>
</reference>
<reference key="4">
    <citation type="journal article" date="2004" name="Genome Res.">
        <title>The status, quality, and expansion of the NIH full-length cDNA project: the Mammalian Gene Collection (MGC).</title>
        <authorList>
            <consortium name="The MGC Project Team"/>
        </authorList>
    </citation>
    <scope>NUCLEOTIDE SEQUENCE [LARGE SCALE MRNA] (ISOFORM 1)</scope>
</reference>
<reference key="5">
    <citation type="journal article" date="2006" name="Mutat. Res.">
        <title>Genetic polymorphisms and haplotype structures of the CYP4A22 gene in a Japanese population.</title>
        <authorList>
            <person name="Hiratsuka M."/>
            <person name="Nozawa H."/>
            <person name="Katsumoto Y."/>
            <person name="Moteki T."/>
            <person name="Sasaki T."/>
            <person name="Konno Y."/>
            <person name="Mizugaki M."/>
        </authorList>
    </citation>
    <scope>VARIANTS CYS-11; TRP-126; SER-130; TYR-152; PHE-185; ARG-231; THR-276; PRO-428 AND PHE-509</scope>
</reference>
<comment type="function">
    <text evidence="3 4">Catalyzes the omega- and (omega-1)-hydroxylation of various fatty acids such as laurate and palmitate. Shows no activity towards arachidonic acid and prostaglandin A1. Lacks functional activity in the kidney and does not contribute to renal 20-hydroxyeicosatetraenoic acid (20-HETE) biosynthesis.</text>
</comment>
<comment type="catalytic activity">
    <reaction evidence="3">
        <text>an omega-methyl-long-chain fatty acid + reduced [NADPH--hemoprotein reductase] + O2 = an omega-hydroxy-long-chain fatty acid + oxidized [NADPH--hemoprotein reductase] + H2O + H(+)</text>
        <dbReference type="Rhea" id="RHEA:56748"/>
        <dbReference type="Rhea" id="RHEA-COMP:11964"/>
        <dbReference type="Rhea" id="RHEA-COMP:11965"/>
        <dbReference type="ChEBI" id="CHEBI:15377"/>
        <dbReference type="ChEBI" id="CHEBI:15378"/>
        <dbReference type="ChEBI" id="CHEBI:15379"/>
        <dbReference type="ChEBI" id="CHEBI:57618"/>
        <dbReference type="ChEBI" id="CHEBI:58210"/>
        <dbReference type="ChEBI" id="CHEBI:140991"/>
        <dbReference type="ChEBI" id="CHEBI:140992"/>
        <dbReference type="EC" id="1.14.14.80"/>
    </reaction>
</comment>
<comment type="biophysicochemical properties">
    <kinetics>
        <KM evidence="3">56.7 uM for laurate</KM>
        <text>Vmax:15.2 umol/min/umol enzyme.</text>
    </kinetics>
</comment>
<comment type="subcellular location">
    <subcellularLocation>
        <location evidence="1">Endoplasmic reticulum membrane</location>
        <topology evidence="1">Peripheral membrane protein</topology>
    </subcellularLocation>
    <subcellularLocation>
        <location evidence="1">Microsome membrane</location>
        <topology evidence="1">Peripheral membrane protein</topology>
    </subcellularLocation>
</comment>
<comment type="alternative products">
    <event type="alternative splicing"/>
    <isoform>
        <id>Q5TCH4-1</id>
        <name>1</name>
        <sequence type="displayed"/>
    </isoform>
    <isoform>
        <id>Q5TCH4-2</id>
        <name>2</name>
        <sequence type="described" ref="VSP_034584"/>
    </isoform>
</comment>
<comment type="similarity">
    <text evidence="6">Belongs to the cytochrome P450 family.</text>
</comment>
<comment type="caution">
    <text evidence="7">Was originally termed CYP4A11.</text>
</comment>
<comment type="online information" name="PharmVar Pharmacogen Variation Consortium">
    <link uri="https://www.pharmvar.org/gene/CYP4A22"/>
    <text>CYP4A22 alleles</text>
</comment>
<keyword id="KW-0025">Alternative splicing</keyword>
<keyword id="KW-0256">Endoplasmic reticulum</keyword>
<keyword id="KW-0349">Heme</keyword>
<keyword id="KW-0408">Iron</keyword>
<keyword id="KW-0443">Lipid metabolism</keyword>
<keyword id="KW-0472">Membrane</keyword>
<keyword id="KW-0479">Metal-binding</keyword>
<keyword id="KW-0492">Microsome</keyword>
<keyword id="KW-0503">Monooxygenase</keyword>
<keyword id="KW-0521">NADP</keyword>
<keyword id="KW-0560">Oxidoreductase</keyword>
<keyword id="KW-0597">Phosphoprotein</keyword>
<keyword id="KW-1267">Proteomics identification</keyword>
<keyword id="KW-1185">Reference proteome</keyword>
<proteinExistence type="evidence at protein level"/>
<protein>
    <recommendedName>
        <fullName>Cytochrome P450 4A22</fullName>
    </recommendedName>
    <alternativeName>
        <fullName>CYPIVA22</fullName>
    </alternativeName>
    <alternativeName>
        <fullName>Fatty acid omega-hydroxylase</fullName>
    </alternativeName>
    <alternativeName>
        <fullName>Lauric acid omega-hydroxylase</fullName>
    </alternativeName>
    <alternativeName>
        <fullName>Long-chain fatty acid omega-monooxygenase</fullName>
        <ecNumber evidence="3">1.14.14.80</ecNumber>
    </alternativeName>
</protein>
<evidence type="ECO:0000250" key="1"/>
<evidence type="ECO:0000250" key="2">
    <source>
        <dbReference type="UniProtKB" id="P20816"/>
    </source>
</evidence>
<evidence type="ECO:0000269" key="3">
    <source>
    </source>
</evidence>
<evidence type="ECO:0000269" key="4">
    <source>
    </source>
</evidence>
<evidence type="ECO:0000269" key="5">
    <source>
    </source>
</evidence>
<evidence type="ECO:0000305" key="6"/>
<evidence type="ECO:0000305" key="7">
    <source>
    </source>
</evidence>
<sequence length="519" mass="59246">MSVSVLSPSRRLGGVSGILQVTSLLILLLLLIKAAQLYLHRQWLLKALQQFPCPPSHWLFGHIQEFQHDQELQRIQERVKTFPSACPYWIWGGKVRVQLYDPDYMKVILGRSDPKSHGSYKFLAPRIGYGLLLLNGQTWFQHRRMLTPAFHNDILKPYVGLMADSVRVMLDKWEELLGQDSPLEVFQHVSLMTLDTIMKSAFSHQGSIQVDRNSQSYIQAISDLNSLVFCCMRNAFHENDTIYSLTSAGRWTHRACQLAHQHTDQVIQLRKAQLQKEGELEKIKRKRHLDFLDILLLAKMENGSILSDKDLRAEVDTFMFEGHDTTASGISWILYALATHPKHQERCREEIHGLLGDGASITWNHLDQMPYTTMCIKEALRLYPPVPGIGRELSTPVTFPDGRSLPKGIMVLLSIYGLHHNPKVWPNLEVFDPSRFAPGSAQHSHAFLPFSGGSRNCIGKQFAMNQLKVARALTLLRFELLPDPTRIPIPMARLVLKSKNGIHLRLRRLPNPCEDKDQL</sequence>
<gene>
    <name type="primary">CYP4A22</name>
</gene>